<comment type="function">
    <text evidence="1 3 4">E1-like enzyme which specifically catalyzes the first step in ufmylation (PubMed:21304510). Activates UFM1 by first adenylating its C-terminal glycine residue with ATP, and thereafter linking this residue to the side chain of a cysteine residue in E1, yielding a UFM1-E1 thioester and free AMP (By similarity). Activates UFM1 via a trans-binding mechanism, in which UFM1 interacts with distinct sites in both subunits of the UBA5 homodimer (By similarity). Trans-binding also promotes stabilization of the UBA5 homodimer, and enhances ATP-binding (By similarity). Transfer of UFM1 from UBA5 to the E2-like enzyme UFC1 also takes place using a trans mechanism (By similarity). Ufmylation plays a key role in various processes, such as ribosome recycling, response to DNA damage, interferon response or reticulophagy (also called ER-phagy) (PubMed:33372156). Ufmylation is essential for erythroid differentiation of both megakaryocytes and erythrocytes (PubMed:21304510).</text>
</comment>
<comment type="subunit">
    <text evidence="1 3">Homodimer; homodimerization is required for UFM1 activation (By similarity). Interacts (via UIS motif) with UFM1; binds UFM1 via a trans-binding mechanism in which UFM1 interacts with distinct sites in both subunits of the UBA5 homodimer (PubMed:21304510). Interacts (via C-terminus) with UFC1 (By similarity). Interacts (via UIS motif) with GABARAPL2 and, with lower affinity, with GABARAP and GABARAPL1 (By similarity).</text>
</comment>
<comment type="subcellular location">
    <subcellularLocation>
        <location evidence="1">Cytoplasm</location>
    </subcellularLocation>
    <subcellularLocation>
        <location evidence="1">Nucleus</location>
    </subcellularLocation>
    <subcellularLocation>
        <location evidence="1">Endoplasmic reticulum membrane</location>
    </subcellularLocation>
    <subcellularLocation>
        <location evidence="1">Golgi apparatus</location>
    </subcellularLocation>
    <text evidence="1">Localizes mainly in the cytoplasm, while it localizes to the nucleus in presence of SUMO2. Interaction with GABARAPL2 promotes localization to the endoplasmic reticulum membrane.</text>
</comment>
<comment type="domain">
    <text evidence="1">The UFC1-binding sequence (UFC) motif mediates interaction with UFC1.</text>
</comment>
<comment type="domain">
    <text evidence="1">The linker region is required to activate the active site of UFC1: it region moves next to active site of UFC1 to reduce the amount of water molecules in the vicinity of UFC1's active site and thereby elevate the nucleophilic activity of UFC1 active site.</text>
</comment>
<comment type="domain">
    <text evidence="1">The UFM1-interacting sequence (UIS) motif mediates interaction with both UFM1 and LC3/GABARAP proteins (GABARAP, GABARAPL1 and GABARAPL2).</text>
</comment>
<comment type="disruption phenotype">
    <text evidence="2 3">Death at embryonic day 12.5 (PubMed:20018847, PubMed:21304510). Embryonic lethality is caused by severe anemia associated with defective differentiation of both megakaryocytes and erythrocytes from common myeloid progenitors (PubMed:21304510).</text>
</comment>
<comment type="similarity">
    <text evidence="6">Belongs to the ubiquitin-activating E1 family. UBA5 subfamily.</text>
</comment>
<comment type="caution">
    <text evidence="1 3">Was initially reported to mediate activation of SUMO2 in addition to UFM1 (By similarity). However, it was later shown that it is specific for UFM1 (PubMed:21304510).</text>
</comment>
<dbReference type="EMBL" id="AK017787">
    <property type="protein sequence ID" value="BAB30933.1"/>
    <property type="molecule type" value="mRNA"/>
</dbReference>
<dbReference type="EMBL" id="AK151823">
    <property type="protein sequence ID" value="BAE30720.1"/>
    <property type="molecule type" value="mRNA"/>
</dbReference>
<dbReference type="EMBL" id="AK152029">
    <property type="protein sequence ID" value="BAE30888.1"/>
    <property type="molecule type" value="mRNA"/>
</dbReference>
<dbReference type="EMBL" id="AK168907">
    <property type="protein sequence ID" value="BAE40721.1"/>
    <property type="molecule type" value="mRNA"/>
</dbReference>
<dbReference type="EMBL" id="CH466560">
    <property type="protein sequence ID" value="EDL21084.1"/>
    <property type="molecule type" value="Genomic_DNA"/>
</dbReference>
<dbReference type="EMBL" id="BC019764">
    <property type="protein sequence ID" value="AAH19764.1"/>
    <property type="molecule type" value="mRNA"/>
</dbReference>
<dbReference type="CCDS" id="CCDS23457.1"/>
<dbReference type="RefSeq" id="NP_079968.2">
    <property type="nucleotide sequence ID" value="NM_025692.3"/>
</dbReference>
<dbReference type="SMR" id="Q8VE47"/>
<dbReference type="BioGRID" id="211631">
    <property type="interactions" value="33"/>
</dbReference>
<dbReference type="FunCoup" id="Q8VE47">
    <property type="interactions" value="4757"/>
</dbReference>
<dbReference type="IntAct" id="Q8VE47">
    <property type="interactions" value="1"/>
</dbReference>
<dbReference type="MINT" id="Q8VE47"/>
<dbReference type="STRING" id="10090.ENSMUSP00000035166"/>
<dbReference type="iPTMnet" id="Q8VE47"/>
<dbReference type="PhosphoSitePlus" id="Q8VE47"/>
<dbReference type="SwissPalm" id="Q8VE47"/>
<dbReference type="jPOST" id="Q8VE47"/>
<dbReference type="PaxDb" id="10090-ENSMUSP00000035166"/>
<dbReference type="PeptideAtlas" id="Q8VE47"/>
<dbReference type="ProteomicsDB" id="298057"/>
<dbReference type="Pumba" id="Q8VE47"/>
<dbReference type="Antibodypedia" id="2258">
    <property type="antibodies" value="164 antibodies from 31 providers"/>
</dbReference>
<dbReference type="DNASU" id="66663"/>
<dbReference type="Ensembl" id="ENSMUST00000035166.12">
    <property type="protein sequence ID" value="ENSMUSP00000035166.6"/>
    <property type="gene ID" value="ENSMUSG00000032557.14"/>
</dbReference>
<dbReference type="GeneID" id="66663"/>
<dbReference type="KEGG" id="mmu:66663"/>
<dbReference type="UCSC" id="uc009rhf.2">
    <property type="organism name" value="mouse"/>
</dbReference>
<dbReference type="AGR" id="MGI:1913913"/>
<dbReference type="CTD" id="79876"/>
<dbReference type="MGI" id="MGI:1913913">
    <property type="gene designation" value="Uba5"/>
</dbReference>
<dbReference type="VEuPathDB" id="HostDB:ENSMUSG00000032557"/>
<dbReference type="eggNOG" id="KOG2336">
    <property type="taxonomic scope" value="Eukaryota"/>
</dbReference>
<dbReference type="GeneTree" id="ENSGT00940000156177"/>
<dbReference type="InParanoid" id="Q8VE47"/>
<dbReference type="OMA" id="MNIVKDY"/>
<dbReference type="OrthoDB" id="206053at2759"/>
<dbReference type="PhylomeDB" id="Q8VE47"/>
<dbReference type="TreeFam" id="TF314168"/>
<dbReference type="Reactome" id="R-MMU-983168">
    <property type="pathway name" value="Antigen processing: Ubiquitination &amp; Proteasome degradation"/>
</dbReference>
<dbReference type="BioGRID-ORCS" id="66663">
    <property type="hits" value="23 hits in 80 CRISPR screens"/>
</dbReference>
<dbReference type="ChiTaRS" id="Uba5">
    <property type="organism name" value="mouse"/>
</dbReference>
<dbReference type="PRO" id="PR:Q8VE47"/>
<dbReference type="Proteomes" id="UP000000589">
    <property type="component" value="Chromosome 9"/>
</dbReference>
<dbReference type="RNAct" id="Q8VE47">
    <property type="molecule type" value="protein"/>
</dbReference>
<dbReference type="Bgee" id="ENSMUSG00000032557">
    <property type="expression patterns" value="Expressed in lacrimal gland and 263 other cell types or tissues"/>
</dbReference>
<dbReference type="ExpressionAtlas" id="Q8VE47">
    <property type="expression patterns" value="baseline and differential"/>
</dbReference>
<dbReference type="GO" id="GO:0005737">
    <property type="term" value="C:cytoplasm"/>
    <property type="evidence" value="ECO:0000250"/>
    <property type="project" value="UniProtKB"/>
</dbReference>
<dbReference type="GO" id="GO:0005829">
    <property type="term" value="C:cytosol"/>
    <property type="evidence" value="ECO:0007669"/>
    <property type="project" value="Ensembl"/>
</dbReference>
<dbReference type="GO" id="GO:0005789">
    <property type="term" value="C:endoplasmic reticulum membrane"/>
    <property type="evidence" value="ECO:0000250"/>
    <property type="project" value="UniProtKB"/>
</dbReference>
<dbReference type="GO" id="GO:0005794">
    <property type="term" value="C:Golgi apparatus"/>
    <property type="evidence" value="ECO:0007669"/>
    <property type="project" value="UniProtKB-SubCell"/>
</dbReference>
<dbReference type="GO" id="GO:0005634">
    <property type="term" value="C:nucleus"/>
    <property type="evidence" value="ECO:0007669"/>
    <property type="project" value="UniProtKB-SubCell"/>
</dbReference>
<dbReference type="GO" id="GO:0005524">
    <property type="term" value="F:ATP binding"/>
    <property type="evidence" value="ECO:0007669"/>
    <property type="project" value="UniProtKB-KW"/>
</dbReference>
<dbReference type="GO" id="GO:0042803">
    <property type="term" value="F:protein homodimerization activity"/>
    <property type="evidence" value="ECO:0000250"/>
    <property type="project" value="UniProtKB"/>
</dbReference>
<dbReference type="GO" id="GO:0071566">
    <property type="term" value="F:UFM1 activating enzyme activity"/>
    <property type="evidence" value="ECO:0000314"/>
    <property type="project" value="UniProtKB"/>
</dbReference>
<dbReference type="GO" id="GO:0008270">
    <property type="term" value="F:zinc ion binding"/>
    <property type="evidence" value="ECO:0000250"/>
    <property type="project" value="UniProtKB"/>
</dbReference>
<dbReference type="GO" id="GO:0030218">
    <property type="term" value="P:erythrocyte differentiation"/>
    <property type="evidence" value="ECO:0000315"/>
    <property type="project" value="UniProtKB"/>
</dbReference>
<dbReference type="GO" id="GO:0030219">
    <property type="term" value="P:megakaryocyte differentiation"/>
    <property type="evidence" value="ECO:0000315"/>
    <property type="project" value="UniProtKB"/>
</dbReference>
<dbReference type="GO" id="GO:0050905">
    <property type="term" value="P:neuromuscular process"/>
    <property type="evidence" value="ECO:0007669"/>
    <property type="project" value="Ensembl"/>
</dbReference>
<dbReference type="GO" id="GO:1990592">
    <property type="term" value="P:protein K69-linked ufmylation"/>
    <property type="evidence" value="ECO:0000250"/>
    <property type="project" value="UniProtKB"/>
</dbReference>
<dbReference type="GO" id="GO:0071569">
    <property type="term" value="P:protein ufmylation"/>
    <property type="evidence" value="ECO:0000314"/>
    <property type="project" value="UniProtKB"/>
</dbReference>
<dbReference type="GO" id="GO:0033146">
    <property type="term" value="P:regulation of intracellular estrogen receptor signaling pathway"/>
    <property type="evidence" value="ECO:0000250"/>
    <property type="project" value="UniProtKB"/>
</dbReference>
<dbReference type="GO" id="GO:0032649">
    <property type="term" value="P:regulation of type II interferon production"/>
    <property type="evidence" value="ECO:0000315"/>
    <property type="project" value="UniProtKB"/>
</dbReference>
<dbReference type="GO" id="GO:0034976">
    <property type="term" value="P:response to endoplasmic reticulum stress"/>
    <property type="evidence" value="ECO:0000250"/>
    <property type="project" value="UniProtKB"/>
</dbReference>
<dbReference type="GO" id="GO:0061709">
    <property type="term" value="P:reticulophagy"/>
    <property type="evidence" value="ECO:0000250"/>
    <property type="project" value="UniProtKB"/>
</dbReference>
<dbReference type="CDD" id="cd00757">
    <property type="entry name" value="ThiF_MoeB_HesA_family"/>
    <property type="match status" value="1"/>
</dbReference>
<dbReference type="FunFam" id="3.40.50.720:FF:000066">
    <property type="entry name" value="Putative ubiquitin-like modifier-activating enzyme 5"/>
    <property type="match status" value="1"/>
</dbReference>
<dbReference type="Gene3D" id="3.40.50.720">
    <property type="entry name" value="NAD(P)-binding Rossmann-like Domain"/>
    <property type="match status" value="1"/>
</dbReference>
<dbReference type="InterPro" id="IPR029752">
    <property type="entry name" value="D-isomer_DH_CS1"/>
</dbReference>
<dbReference type="InterPro" id="IPR045886">
    <property type="entry name" value="ThiF/MoeB/HesA"/>
</dbReference>
<dbReference type="InterPro" id="IPR000594">
    <property type="entry name" value="ThiF_NAD_FAD-bd"/>
</dbReference>
<dbReference type="InterPro" id="IPR035985">
    <property type="entry name" value="Ubiquitin-activating_enz"/>
</dbReference>
<dbReference type="PANTHER" id="PTHR10953">
    <property type="entry name" value="UBIQUITIN-ACTIVATING ENZYME E1"/>
    <property type="match status" value="1"/>
</dbReference>
<dbReference type="PANTHER" id="PTHR10953:SF9">
    <property type="entry name" value="UBIQUITIN-LIKE MODIFIER-ACTIVATING ENZYME 5"/>
    <property type="match status" value="1"/>
</dbReference>
<dbReference type="Pfam" id="PF00899">
    <property type="entry name" value="ThiF"/>
    <property type="match status" value="1"/>
</dbReference>
<dbReference type="SUPFAM" id="SSF69572">
    <property type="entry name" value="Activating enzymes of the ubiquitin-like proteins"/>
    <property type="match status" value="1"/>
</dbReference>
<sequence>MADSVERLRQRVEELEQELARERTRRSGGDGHCGRTRIQEMSDEVLDSNPYSRLMALKRMGIVSDYKKIRTYAVAIVGVGGVGSVTAEMLTRCGIGKLLLFDYDKVELANMNRLFFQPYQAGLSKVHAAEHTLRNINPDVLFEVHNYNITTVEHFEHFMNRISNGGLEEGQPVDLVLSCVDNFEARMAINTACNELGQTWMESGVSENAVSGHIQLMIPGESACFACAPPLVVASNIDEKTLKREGVCAASLPTTMGVVAGILVQNVLKFLLKFGTVSFYLGYNAMQDFFPTMFMKPNPQCDDKNCRKQQEEYKKRAAALPTQEAEPQEEAEVVHEDNEWGIELVSEVSEEELKNSSGPVPTLPEGITVAYTVPKKTEDSASEVTVEDSGESLEDLMARMKNM</sequence>
<protein>
    <recommendedName>
        <fullName evidence="6">Ubiquitin-like modifier-activating enzyme 5</fullName>
        <shortName evidence="5">Ubiquitin-activating enzyme 5</shortName>
    </recommendedName>
    <alternativeName>
        <fullName evidence="6">UFM1-activating enzyme</fullName>
    </alternativeName>
</protein>
<keyword id="KW-0067">ATP-binding</keyword>
<keyword id="KW-0963">Cytoplasm</keyword>
<keyword id="KW-0256">Endoplasmic reticulum</keyword>
<keyword id="KW-0333">Golgi apparatus</keyword>
<keyword id="KW-0472">Membrane</keyword>
<keyword id="KW-0479">Metal-binding</keyword>
<keyword id="KW-0547">Nucleotide-binding</keyword>
<keyword id="KW-0539">Nucleus</keyword>
<keyword id="KW-0597">Phosphoprotein</keyword>
<keyword id="KW-1185">Reference proteome</keyword>
<keyword id="KW-0833">Ubl conjugation pathway</keyword>
<keyword id="KW-0862">Zinc</keyword>
<gene>
    <name evidence="5 9" type="primary">Uba5</name>
</gene>
<name>UBA5_MOUSE</name>
<organism>
    <name type="scientific">Mus musculus</name>
    <name type="common">Mouse</name>
    <dbReference type="NCBI Taxonomy" id="10090"/>
    <lineage>
        <taxon>Eukaryota</taxon>
        <taxon>Metazoa</taxon>
        <taxon>Chordata</taxon>
        <taxon>Craniata</taxon>
        <taxon>Vertebrata</taxon>
        <taxon>Euteleostomi</taxon>
        <taxon>Mammalia</taxon>
        <taxon>Eutheria</taxon>
        <taxon>Euarchontoglires</taxon>
        <taxon>Glires</taxon>
        <taxon>Rodentia</taxon>
        <taxon>Myomorpha</taxon>
        <taxon>Muroidea</taxon>
        <taxon>Muridae</taxon>
        <taxon>Murinae</taxon>
        <taxon>Mus</taxon>
        <taxon>Mus</taxon>
    </lineage>
</organism>
<accession>Q8VE47</accession>
<accession>Q3TG27</accession>
<accession>Q3U8X9</accession>
<accession>Q3U9E7</accession>
<accession>Q9CYD6</accession>
<feature type="chain" id="PRO_0000194971" description="Ubiquitin-like modifier-activating enzyme 5">
    <location>
        <begin position="1"/>
        <end position="403"/>
    </location>
</feature>
<feature type="region of interest" description="Linker" evidence="1">
    <location>
        <begin position="346"/>
        <end position="376"/>
    </location>
</feature>
<feature type="short sequence motif" description="UFM1-interacting sequence (UIS)" evidence="1">
    <location>
        <begin position="333"/>
        <end position="345"/>
    </location>
</feature>
<feature type="short sequence motif" description="UFC1-binding sequence (UFC)" evidence="1">
    <location>
        <begin position="388"/>
        <end position="403"/>
    </location>
</feature>
<feature type="active site" description="Glycyl thioester intermediate" evidence="7">
    <location>
        <position position="248"/>
    </location>
</feature>
<feature type="binding site" evidence="1">
    <location>
        <position position="81"/>
    </location>
    <ligand>
        <name>ATP</name>
        <dbReference type="ChEBI" id="CHEBI:30616"/>
    </ligand>
</feature>
<feature type="binding site" evidence="1">
    <location>
        <position position="102"/>
    </location>
    <ligand>
        <name>ATP</name>
        <dbReference type="ChEBI" id="CHEBI:30616"/>
    </ligand>
</feature>
<feature type="binding site" evidence="1">
    <location>
        <position position="125"/>
    </location>
    <ligand>
        <name>ATP</name>
        <dbReference type="ChEBI" id="CHEBI:30616"/>
    </ligand>
</feature>
<feature type="binding site" evidence="1">
    <location>
        <position position="148"/>
    </location>
    <ligand>
        <name>ATP</name>
        <dbReference type="ChEBI" id="CHEBI:30616"/>
    </ligand>
</feature>
<feature type="binding site" evidence="1">
    <location>
        <position position="182"/>
    </location>
    <ligand>
        <name>ATP</name>
        <dbReference type="ChEBI" id="CHEBI:30616"/>
    </ligand>
</feature>
<feature type="binding site" evidence="1">
    <location>
        <position position="224"/>
    </location>
    <ligand>
        <name>Zn(2+)</name>
        <dbReference type="ChEBI" id="CHEBI:29105"/>
    </ligand>
</feature>
<feature type="binding site" evidence="1">
    <location>
        <position position="227"/>
    </location>
    <ligand>
        <name>Zn(2+)</name>
        <dbReference type="ChEBI" id="CHEBI:29105"/>
    </ligand>
</feature>
<feature type="binding site" evidence="1">
    <location>
        <position position="301"/>
    </location>
    <ligand>
        <name>Zn(2+)</name>
        <dbReference type="ChEBI" id="CHEBI:29105"/>
    </ligand>
</feature>
<feature type="binding site" evidence="1">
    <location>
        <position position="306"/>
    </location>
    <ligand>
        <name>Zn(2+)</name>
        <dbReference type="ChEBI" id="CHEBI:29105"/>
    </ligand>
</feature>
<feature type="modified residue" description="Phosphoserine" evidence="1">
    <location>
        <position position="357"/>
    </location>
</feature>
<feature type="modified residue" description="Phosphoserine" evidence="10">
    <location>
        <position position="392"/>
    </location>
</feature>
<feature type="mutagenesis site" description="Abolished ability to catalyze the first step in ufmylation." evidence="3 4">
    <original>C</original>
    <variation>S</variation>
    <variation>A</variation>
    <location>
        <position position="248"/>
    </location>
</feature>
<feature type="mutagenesis site" description="Impaired ability to activate UFM1." evidence="4">
    <original>WGIEL</original>
    <variation>LGIEA</variation>
    <location>
        <begin position="340"/>
        <end position="344"/>
    </location>
</feature>
<feature type="sequence conflict" description="In Ref. 1; BAB30933." evidence="6" ref="1">
    <original>QR</original>
    <variation>HG</variation>
    <location>
        <begin position="10"/>
        <end position="11"/>
    </location>
</feature>
<feature type="sequence conflict" description="In Ref. 1; BAE30888." evidence="6" ref="1">
    <original>D</original>
    <variation>G</variation>
    <location>
        <position position="30"/>
    </location>
</feature>
<feature type="sequence conflict" description="In Ref. 1; BAB30933." evidence="6" ref="1">
    <original>E</original>
    <variation>G</variation>
    <location>
        <position position="153"/>
    </location>
</feature>
<feature type="sequence conflict" description="In Ref. 1; BAB30933." evidence="6" ref="1">
    <original>E</original>
    <variation>G</variation>
    <location>
        <position position="156"/>
    </location>
</feature>
<feature type="sequence conflict" description="In Ref. 1; BAE30720/BAE30888." evidence="6" ref="1">
    <original>E</original>
    <variation>K</variation>
    <location>
        <position position="156"/>
    </location>
</feature>
<feature type="sequence conflict" description="In Ref. 1; BAB30933." evidence="6" ref="1">
    <original>N</original>
    <variation>K</variation>
    <location>
        <position position="164"/>
    </location>
</feature>
<feature type="sequence conflict" description="In Ref. 1; BAB30933." evidence="6" ref="1">
    <original>C</original>
    <variation>L</variation>
    <location>
        <position position="224"/>
    </location>
</feature>
<feature type="sequence conflict" description="In Ref. 3; AAH19764." evidence="6" ref="3">
    <original>Q</original>
    <variation>H</variation>
    <location>
        <position position="300"/>
    </location>
</feature>
<feature type="sequence conflict" description="In Ref. 3; AAH19764." evidence="6" ref="3">
    <original>N</original>
    <variation>T</variation>
    <location>
        <position position="402"/>
    </location>
</feature>
<reference key="1">
    <citation type="journal article" date="2005" name="Science">
        <title>The transcriptional landscape of the mammalian genome.</title>
        <authorList>
            <person name="Carninci P."/>
            <person name="Kasukawa T."/>
            <person name="Katayama S."/>
            <person name="Gough J."/>
            <person name="Frith M.C."/>
            <person name="Maeda N."/>
            <person name="Oyama R."/>
            <person name="Ravasi T."/>
            <person name="Lenhard B."/>
            <person name="Wells C."/>
            <person name="Kodzius R."/>
            <person name="Shimokawa K."/>
            <person name="Bajic V.B."/>
            <person name="Brenner S.E."/>
            <person name="Batalov S."/>
            <person name="Forrest A.R."/>
            <person name="Zavolan M."/>
            <person name="Davis M.J."/>
            <person name="Wilming L.G."/>
            <person name="Aidinis V."/>
            <person name="Allen J.E."/>
            <person name="Ambesi-Impiombato A."/>
            <person name="Apweiler R."/>
            <person name="Aturaliya R.N."/>
            <person name="Bailey T.L."/>
            <person name="Bansal M."/>
            <person name="Baxter L."/>
            <person name="Beisel K.W."/>
            <person name="Bersano T."/>
            <person name="Bono H."/>
            <person name="Chalk A.M."/>
            <person name="Chiu K.P."/>
            <person name="Choudhary V."/>
            <person name="Christoffels A."/>
            <person name="Clutterbuck D.R."/>
            <person name="Crowe M.L."/>
            <person name="Dalla E."/>
            <person name="Dalrymple B.P."/>
            <person name="de Bono B."/>
            <person name="Della Gatta G."/>
            <person name="di Bernardo D."/>
            <person name="Down T."/>
            <person name="Engstrom P."/>
            <person name="Fagiolini M."/>
            <person name="Faulkner G."/>
            <person name="Fletcher C.F."/>
            <person name="Fukushima T."/>
            <person name="Furuno M."/>
            <person name="Futaki S."/>
            <person name="Gariboldi M."/>
            <person name="Georgii-Hemming P."/>
            <person name="Gingeras T.R."/>
            <person name="Gojobori T."/>
            <person name="Green R.E."/>
            <person name="Gustincich S."/>
            <person name="Harbers M."/>
            <person name="Hayashi Y."/>
            <person name="Hensch T.K."/>
            <person name="Hirokawa N."/>
            <person name="Hill D."/>
            <person name="Huminiecki L."/>
            <person name="Iacono M."/>
            <person name="Ikeo K."/>
            <person name="Iwama A."/>
            <person name="Ishikawa T."/>
            <person name="Jakt M."/>
            <person name="Kanapin A."/>
            <person name="Katoh M."/>
            <person name="Kawasawa Y."/>
            <person name="Kelso J."/>
            <person name="Kitamura H."/>
            <person name="Kitano H."/>
            <person name="Kollias G."/>
            <person name="Krishnan S.P."/>
            <person name="Kruger A."/>
            <person name="Kummerfeld S.K."/>
            <person name="Kurochkin I.V."/>
            <person name="Lareau L.F."/>
            <person name="Lazarevic D."/>
            <person name="Lipovich L."/>
            <person name="Liu J."/>
            <person name="Liuni S."/>
            <person name="McWilliam S."/>
            <person name="Madan Babu M."/>
            <person name="Madera M."/>
            <person name="Marchionni L."/>
            <person name="Matsuda H."/>
            <person name="Matsuzawa S."/>
            <person name="Miki H."/>
            <person name="Mignone F."/>
            <person name="Miyake S."/>
            <person name="Morris K."/>
            <person name="Mottagui-Tabar S."/>
            <person name="Mulder N."/>
            <person name="Nakano N."/>
            <person name="Nakauchi H."/>
            <person name="Ng P."/>
            <person name="Nilsson R."/>
            <person name="Nishiguchi S."/>
            <person name="Nishikawa S."/>
            <person name="Nori F."/>
            <person name="Ohara O."/>
            <person name="Okazaki Y."/>
            <person name="Orlando V."/>
            <person name="Pang K.C."/>
            <person name="Pavan W.J."/>
            <person name="Pavesi G."/>
            <person name="Pesole G."/>
            <person name="Petrovsky N."/>
            <person name="Piazza S."/>
            <person name="Reed J."/>
            <person name="Reid J.F."/>
            <person name="Ring B.Z."/>
            <person name="Ringwald M."/>
            <person name="Rost B."/>
            <person name="Ruan Y."/>
            <person name="Salzberg S.L."/>
            <person name="Sandelin A."/>
            <person name="Schneider C."/>
            <person name="Schoenbach C."/>
            <person name="Sekiguchi K."/>
            <person name="Semple C.A."/>
            <person name="Seno S."/>
            <person name="Sessa L."/>
            <person name="Sheng Y."/>
            <person name="Shibata Y."/>
            <person name="Shimada H."/>
            <person name="Shimada K."/>
            <person name="Silva D."/>
            <person name="Sinclair B."/>
            <person name="Sperling S."/>
            <person name="Stupka E."/>
            <person name="Sugiura K."/>
            <person name="Sultana R."/>
            <person name="Takenaka Y."/>
            <person name="Taki K."/>
            <person name="Tammoja K."/>
            <person name="Tan S.L."/>
            <person name="Tang S."/>
            <person name="Taylor M.S."/>
            <person name="Tegner J."/>
            <person name="Teichmann S.A."/>
            <person name="Ueda H.R."/>
            <person name="van Nimwegen E."/>
            <person name="Verardo R."/>
            <person name="Wei C.L."/>
            <person name="Yagi K."/>
            <person name="Yamanishi H."/>
            <person name="Zabarovsky E."/>
            <person name="Zhu S."/>
            <person name="Zimmer A."/>
            <person name="Hide W."/>
            <person name="Bult C."/>
            <person name="Grimmond S.M."/>
            <person name="Teasdale R.D."/>
            <person name="Liu E.T."/>
            <person name="Brusic V."/>
            <person name="Quackenbush J."/>
            <person name="Wahlestedt C."/>
            <person name="Mattick J.S."/>
            <person name="Hume D.A."/>
            <person name="Kai C."/>
            <person name="Sasaki D."/>
            <person name="Tomaru Y."/>
            <person name="Fukuda S."/>
            <person name="Kanamori-Katayama M."/>
            <person name="Suzuki M."/>
            <person name="Aoki J."/>
            <person name="Arakawa T."/>
            <person name="Iida J."/>
            <person name="Imamura K."/>
            <person name="Itoh M."/>
            <person name="Kato T."/>
            <person name="Kawaji H."/>
            <person name="Kawagashira N."/>
            <person name="Kawashima T."/>
            <person name="Kojima M."/>
            <person name="Kondo S."/>
            <person name="Konno H."/>
            <person name="Nakano K."/>
            <person name="Ninomiya N."/>
            <person name="Nishio T."/>
            <person name="Okada M."/>
            <person name="Plessy C."/>
            <person name="Shibata K."/>
            <person name="Shiraki T."/>
            <person name="Suzuki S."/>
            <person name="Tagami M."/>
            <person name="Waki K."/>
            <person name="Watahiki A."/>
            <person name="Okamura-Oho Y."/>
            <person name="Suzuki H."/>
            <person name="Kawai J."/>
            <person name="Hayashizaki Y."/>
        </authorList>
    </citation>
    <scope>NUCLEOTIDE SEQUENCE [LARGE SCALE MRNA]</scope>
    <source>
        <strain>C57BL/6J</strain>
        <tissue>Bone marrow</tissue>
        <tissue>Heart</tissue>
    </source>
</reference>
<reference key="2">
    <citation type="submission" date="2005-07" db="EMBL/GenBank/DDBJ databases">
        <authorList>
            <person name="Mural R.J."/>
            <person name="Adams M.D."/>
            <person name="Myers E.W."/>
            <person name="Smith H.O."/>
            <person name="Venter J.C."/>
        </authorList>
    </citation>
    <scope>NUCLEOTIDE SEQUENCE [LARGE SCALE GENOMIC DNA]</scope>
</reference>
<reference evidence="8" key="3">
    <citation type="journal article" date="2004" name="Genome Res.">
        <title>The status, quality, and expansion of the NIH full-length cDNA project: the Mammalian Gene Collection (MGC).</title>
        <authorList>
            <consortium name="The MGC Project Team"/>
        </authorList>
    </citation>
    <scope>NUCLEOTIDE SEQUENCE [LARGE SCALE MRNA]</scope>
    <source>
        <strain evidence="8">Czech II</strain>
        <tissue evidence="8">Mammary gland</tissue>
    </source>
</reference>
<reference key="4">
    <citation type="journal article" date="2010" name="Cell">
        <title>A tissue-specific atlas of mouse protein phosphorylation and expression.</title>
        <authorList>
            <person name="Huttlin E.L."/>
            <person name="Jedrychowski M.P."/>
            <person name="Elias J.E."/>
            <person name="Goswami T."/>
            <person name="Rad R."/>
            <person name="Beausoleil S.A."/>
            <person name="Villen J."/>
            <person name="Haas W."/>
            <person name="Sowa M.E."/>
            <person name="Gygi S.P."/>
        </authorList>
    </citation>
    <scope>PHOSPHORYLATION [LARGE SCALE ANALYSIS] AT SER-392</scope>
    <scope>IDENTIFICATION BY MASS SPECTROMETRY [LARGE SCALE ANALYSIS]</scope>
    <source>
        <tissue>Brain</tissue>
        <tissue>Brown adipose tissue</tissue>
        <tissue>Heart</tissue>
        <tissue>Kidney</tissue>
        <tissue>Liver</tissue>
        <tissue>Lung</tissue>
        <tissue>Pancreas</tissue>
        <tissue>Spleen</tissue>
        <tissue>Testis</tissue>
    </source>
</reference>
<reference key="5">
    <citation type="journal article" date="2010" name="J. Biol. Chem.">
        <title>A novel type of E3 ligase for the Ufm1 conjugation system.</title>
        <authorList>
            <person name="Tatsumi K."/>
            <person name="Sou Y.S."/>
            <person name="Tada N."/>
            <person name="Nakamura E."/>
            <person name="Iemura S."/>
            <person name="Natsume T."/>
            <person name="Kang S.H."/>
            <person name="Chung C.H."/>
            <person name="Kasahara M."/>
            <person name="Kominami E."/>
            <person name="Yamamoto M."/>
            <person name="Tanaka K."/>
            <person name="Komatsu M."/>
        </authorList>
    </citation>
    <scope>FUNCTION</scope>
    <scope>DISRUPTION PHENOTYPE</scope>
</reference>
<reference key="6">
    <citation type="journal article" date="2011" name="Nat. Commun.">
        <title>The Ufm1-activating enzyme Uba5 is indispensable for erythroid differentiation in mice.</title>
        <authorList>
            <person name="Tatsumi K."/>
            <person name="Yamamoto-Mukai H."/>
            <person name="Shimizu R."/>
            <person name="Waguri S."/>
            <person name="Sou Y.S."/>
            <person name="Sakamoto A."/>
            <person name="Taya C."/>
            <person name="Shitara H."/>
            <person name="Hara T."/>
            <person name="Chung C.H."/>
            <person name="Tanaka K."/>
            <person name="Yamamoto M."/>
            <person name="Komatsu M."/>
        </authorList>
    </citation>
    <scope>FUNCTION</scope>
    <scope>DISRUPTION PHENOTYPE</scope>
    <scope>MUTAGENESIS OF CYS-248</scope>
</reference>
<reference key="7">
    <citation type="journal article" date="2021" name="Proc. Natl. Acad. Sci. U.S.A.">
        <title>UFMylation inhibits the proinflammatory capacity of interferon-gamma-activated macrophages.</title>
        <authorList>
            <person name="Balce D.R."/>
            <person name="Wang Y.T."/>
            <person name="McAllaster M.R."/>
            <person name="Dunlap B.F."/>
            <person name="Orvedahl A."/>
            <person name="Hykes B.L. Jr."/>
            <person name="Droit L."/>
            <person name="Handley S.A."/>
            <person name="Wilen C.B."/>
            <person name="Doench J.G."/>
            <person name="Orchard R.C."/>
            <person name="Stallings C.L."/>
            <person name="Virgin H.W."/>
        </authorList>
    </citation>
    <scope>FUNCTION</scope>
    <scope>MUTAGENESIS OF CYS-248 AND 340-TRP--LEU-344</scope>
</reference>
<proteinExistence type="evidence at protein level"/>
<evidence type="ECO:0000250" key="1">
    <source>
        <dbReference type="UniProtKB" id="Q9GZZ9"/>
    </source>
</evidence>
<evidence type="ECO:0000269" key="2">
    <source>
    </source>
</evidence>
<evidence type="ECO:0000269" key="3">
    <source>
    </source>
</evidence>
<evidence type="ECO:0000269" key="4">
    <source>
    </source>
</evidence>
<evidence type="ECO:0000303" key="5">
    <source>
    </source>
</evidence>
<evidence type="ECO:0000305" key="6"/>
<evidence type="ECO:0000305" key="7">
    <source>
    </source>
</evidence>
<evidence type="ECO:0000312" key="8">
    <source>
        <dbReference type="EMBL" id="AAH19764.1"/>
    </source>
</evidence>
<evidence type="ECO:0000312" key="9">
    <source>
        <dbReference type="MGI" id="MGI:1913913"/>
    </source>
</evidence>
<evidence type="ECO:0007744" key="10">
    <source>
    </source>
</evidence>